<reference key="1">
    <citation type="journal article" date="2013" name="Nat. Genet.">
        <title>The high-quality draft genome of peach (Prunus persica) identifies unique patterns of genetic diversity, domestication and genome evolution.</title>
        <authorList>
            <consortium name="International Peach Genome Initiative"/>
            <person name="Verde I."/>
            <person name="Abbott A.G."/>
            <person name="Scalabrin S."/>
            <person name="Jung S."/>
            <person name="Shu S."/>
            <person name="Marroni F."/>
            <person name="Zhebentyayeva T."/>
            <person name="Dettori M.T."/>
            <person name="Grimwood J."/>
            <person name="Cattonaro F."/>
            <person name="Zuccolo A."/>
            <person name="Rossini L."/>
            <person name="Jenkins J."/>
            <person name="Vendramin E."/>
            <person name="Meisel L.A."/>
            <person name="Decroocq V."/>
            <person name="Sosinski B."/>
            <person name="Prochnik S."/>
            <person name="Mitros T."/>
            <person name="Policriti A."/>
            <person name="Cipriani G."/>
            <person name="Dondini L."/>
            <person name="Ficklin S."/>
            <person name="Goodstein D.M."/>
            <person name="Xuan P."/>
            <person name="Del Fabbro C.D."/>
            <person name="Aramini V."/>
            <person name="Copetti D."/>
            <person name="Gonzalez S."/>
            <person name="Horner D.S."/>
            <person name="Falchi R."/>
            <person name="Lucas S."/>
            <person name="Mica E."/>
            <person name="Maldonado J."/>
            <person name="Lazzari B."/>
            <person name="Bielenberg D."/>
            <person name="Pirona R."/>
            <person name="Miculan M."/>
            <person name="Barakat A."/>
            <person name="Testolin R."/>
            <person name="Stella A."/>
            <person name="Tartarini S."/>
            <person name="Tonutti P."/>
            <person name="Arus P."/>
            <person name="Orellana A."/>
            <person name="Wells C."/>
            <person name="Main D."/>
            <person name="Vizzotto G."/>
            <person name="Silva H."/>
            <person name="Salamini F."/>
            <person name="Schmutz J."/>
            <person name="Morgante M."/>
            <person name="Rokhsar D.S."/>
        </authorList>
    </citation>
    <scope>NUCLEOTIDE SEQUENCE [LARGE SCALE GENOMIC DNA]</scope>
    <source>
        <strain>cv. Nemared</strain>
    </source>
</reference>
<reference key="2">
    <citation type="journal article" date="2017" name="Plant J.">
        <title>DRO1 influences root system architecture in Arabidopsis and Prunus species.</title>
        <authorList>
            <person name="Guseman J.M."/>
            <person name="Webb K."/>
            <person name="Srinivasan C."/>
            <person name="Dardick C."/>
        </authorList>
    </citation>
    <scope>FUNCTION</scope>
    <scope>TISSUE SPECIFICITY</scope>
</reference>
<proteinExistence type="evidence at transcript level"/>
<sequence>MKLFGWMQNKLNGKQGNKKPNTVPITTHPAKQEPREEFSDWPHGLLAIGTFGNNDLKENAAESQDIQEDPTSSEEILDNFTPEEVGKLHKELTKLLTRKPNIEKEIADLPLDRFLNCPSSLEVDRRNSNALCSDSADDHKDEDIEKTISVILGRCKEICGDKNKKAIGKKSISFLLKKMFVCRSGFAPQPSLRDTLQESRMEKLLRVMLNKKIINPQGSSRAASMKKYLEDRQIPTKKESNTEDDTKEKINNGCKWVKTDSEYIVLEI</sequence>
<keyword id="KW-0341">Growth regulation</keyword>
<keyword id="KW-1185">Reference proteome</keyword>
<name>DRO1_PRUPE</name>
<organism>
    <name type="scientific">Prunus persica</name>
    <name type="common">Peach</name>
    <name type="synonym">Amygdalus persica</name>
    <dbReference type="NCBI Taxonomy" id="3760"/>
    <lineage>
        <taxon>Eukaryota</taxon>
        <taxon>Viridiplantae</taxon>
        <taxon>Streptophyta</taxon>
        <taxon>Embryophyta</taxon>
        <taxon>Tracheophyta</taxon>
        <taxon>Spermatophyta</taxon>
        <taxon>Magnoliopsida</taxon>
        <taxon>eudicotyledons</taxon>
        <taxon>Gunneridae</taxon>
        <taxon>Pentapetalae</taxon>
        <taxon>rosids</taxon>
        <taxon>fabids</taxon>
        <taxon>Rosales</taxon>
        <taxon>Rosaceae</taxon>
        <taxon>Amygdaloideae</taxon>
        <taxon>Amygdaleae</taxon>
        <taxon>Prunus</taxon>
    </lineage>
</organism>
<evidence type="ECO:0000256" key="1">
    <source>
        <dbReference type="SAM" id="MobiDB-lite"/>
    </source>
</evidence>
<evidence type="ECO:0000269" key="2">
    <source>
    </source>
</evidence>
<evidence type="ECO:0000303" key="3">
    <source>
    </source>
</evidence>
<evidence type="ECO:0000305" key="4"/>
<evidence type="ECO:0000312" key="5">
    <source>
        <dbReference type="EMBL" id="ONI15340.1"/>
    </source>
</evidence>
<accession>A0A251PW43</accession>
<accession>A0A251PUT9</accession>
<accession>M5X7Z4</accession>
<feature type="chain" id="PRO_0000451023" description="Protein DEEPER ROOTING 1">
    <location>
        <begin position="1"/>
        <end position="268"/>
    </location>
</feature>
<feature type="region of interest" description="Disordered" evidence="1">
    <location>
        <begin position="11"/>
        <end position="39"/>
    </location>
</feature>
<feature type="region of interest" description="Disordered" evidence="1">
    <location>
        <begin position="220"/>
        <end position="246"/>
    </location>
</feature>
<feature type="short sequence motif" description="IGT motif" evidence="4">
    <location>
        <begin position="44"/>
        <end position="50"/>
    </location>
</feature>
<feature type="compositionally biased region" description="Low complexity" evidence="1">
    <location>
        <begin position="11"/>
        <end position="21"/>
    </location>
</feature>
<feature type="compositionally biased region" description="Basic and acidic residues" evidence="1">
    <location>
        <begin position="30"/>
        <end position="39"/>
    </location>
</feature>
<feature type="compositionally biased region" description="Basic and acidic residues" evidence="1">
    <location>
        <begin position="227"/>
        <end position="246"/>
    </location>
</feature>
<feature type="sequence conflict" description="In Ref. 1; ONI15341." evidence="4" ref="1">
    <original>L</original>
    <variation>V</variation>
    <location>
        <position position="204"/>
    </location>
</feature>
<comment type="function">
    <text evidence="2">Involved in the development of the root system architecture by influencing lateral root angles and primary root length.</text>
</comment>
<comment type="tissue specificity">
    <text evidence="2">Expressed in roots.</text>
</comment>
<comment type="miscellaneous">
    <text evidence="2">Plants overexpressing DRO1 exhibit increased length and density of roots, and increased biomass of shoots.</text>
</comment>
<comment type="similarity">
    <text evidence="4">Belongs to the LAZY family.</text>
</comment>
<comment type="sequence caution" evidence="4">
    <conflict type="erroneous gene model prediction">
        <sequence resource="EMBL-CDS" id="EMJ17638"/>
    </conflict>
</comment>
<comment type="sequence caution" evidence="4">
    <conflict type="erroneous gene model prediction">
        <sequence resource="EMBL-CDS" id="ONI15341"/>
    </conflict>
</comment>
<dbReference type="EMBL" id="KB639030">
    <property type="protein sequence ID" value="EMJ17638.1"/>
    <property type="status" value="ALT_SEQ"/>
    <property type="molecule type" value="Genomic_DNA"/>
</dbReference>
<dbReference type="EMBL" id="CM007653">
    <property type="protein sequence ID" value="ONI15340.1"/>
    <property type="molecule type" value="Genomic_DNA"/>
</dbReference>
<dbReference type="EMBL" id="CM007653">
    <property type="protein sequence ID" value="ONI15341.1"/>
    <property type="status" value="ALT_SEQ"/>
    <property type="molecule type" value="Genomic_DNA"/>
</dbReference>
<dbReference type="SMR" id="A0A251PW43"/>
<dbReference type="STRING" id="3760.A0A251PW43"/>
<dbReference type="EnsemblPlants" id="ONI15340">
    <property type="protein sequence ID" value="ONI15340"/>
    <property type="gene ID" value="PRUPE_3G038300"/>
</dbReference>
<dbReference type="Gramene" id="ONI15340">
    <property type="protein sequence ID" value="ONI15340"/>
    <property type="gene ID" value="PRUPE_3G038300"/>
</dbReference>
<dbReference type="eggNOG" id="ENOG502QSTE">
    <property type="taxonomic scope" value="Eukaryota"/>
</dbReference>
<dbReference type="HOGENOM" id="CLU_068790_0_0_1"/>
<dbReference type="OrthoDB" id="1729737at2759"/>
<dbReference type="Proteomes" id="UP000006882">
    <property type="component" value="Chromosome g3"/>
</dbReference>
<dbReference type="GO" id="GO:0009958">
    <property type="term" value="P:positive gravitropism"/>
    <property type="evidence" value="ECO:0000315"/>
    <property type="project" value="UniProtKB"/>
</dbReference>
<dbReference type="GO" id="GO:0040008">
    <property type="term" value="P:regulation of growth"/>
    <property type="evidence" value="ECO:0007669"/>
    <property type="project" value="InterPro"/>
</dbReference>
<dbReference type="InterPro" id="IPR044683">
    <property type="entry name" value="LAZY"/>
</dbReference>
<dbReference type="PANTHER" id="PTHR34045">
    <property type="entry name" value="OS03G0406300 PROTEIN"/>
    <property type="match status" value="1"/>
</dbReference>
<dbReference type="PANTHER" id="PTHR34045:SF3">
    <property type="entry name" value="PROTEIN LAZY 4"/>
    <property type="match status" value="1"/>
</dbReference>
<protein>
    <recommendedName>
        <fullName evidence="3">Protein DEEPER ROOTING 1</fullName>
        <shortName evidence="3">PpeDRO1</shortName>
    </recommendedName>
</protein>
<gene>
    <name evidence="3" type="primary">DRO1</name>
    <name evidence="5" type="ORF">PRUPE_3G038300</name>
</gene>